<keyword id="KW-0067">ATP-binding</keyword>
<keyword id="KW-0143">Chaperone</keyword>
<keyword id="KW-0963">Cytoplasm</keyword>
<keyword id="KW-0547">Nucleotide-binding</keyword>
<keyword id="KW-1185">Reference proteome</keyword>
<keyword id="KW-0346">Stress response</keyword>
<gene>
    <name evidence="1" type="primary">hslU</name>
    <name type="ordered locus">EC55989_4409</name>
</gene>
<sequence length="443" mass="49593">MSEMTPREIVSELDKHIIGQDNAKRSVAIALRNRWRRMQLNEELRHEVTPKNILMIGPTGVGKTEIARRLAKLANAPFIKVEATKFTEVGYVGKEVDSIIRDLTDAAVKMVRVQAIEKNRYRAEELAEERILDVLIPPAKNNWGQTEQQQEPSAARQAFRKKLREGQLDDKEIEIDLAAAPMGVEIMAPPGMEEMTSQLQSMFQNLGGQKQKARKLKIKDAMKLLIEEEAAKLVNPEELKQDAIDAVEQHGIVFIDEIDKICKRGESSGPDVSREGVQRDLLPLVEGCTVSTKHGMVKTDHILFIASGAFQIAKPSDLIPELQGRLPIRVELQALTTSDFERILTEPNASITVQYKALMATEGVNIEFTDSGIKRIAEAAWQVNESTENIGARRLHTVLERLMEEISYDASDLSGQTIIIDADYVSKHLDALVADEDLSRFIL</sequence>
<evidence type="ECO:0000255" key="1">
    <source>
        <dbReference type="HAMAP-Rule" id="MF_00249"/>
    </source>
</evidence>
<comment type="function">
    <text evidence="1">ATPase subunit of a proteasome-like degradation complex; this subunit has chaperone activity. The binding of ATP and its subsequent hydrolysis by HslU are essential for unfolding of protein substrates subsequently hydrolyzed by HslV. HslU recognizes the N-terminal part of its protein substrates and unfolds these before they are guided to HslV for hydrolysis.</text>
</comment>
<comment type="subunit">
    <text evidence="1">A double ring-shaped homohexamer of HslV is capped on each side by a ring-shaped HslU homohexamer. The assembly of the HslU/HslV complex is dependent on binding of ATP.</text>
</comment>
<comment type="subcellular location">
    <subcellularLocation>
        <location evidence="1">Cytoplasm</location>
    </subcellularLocation>
</comment>
<comment type="induction">
    <text evidence="1">By heat shock.</text>
</comment>
<comment type="similarity">
    <text evidence="1">Belongs to the ClpX chaperone family. HslU subfamily.</text>
</comment>
<accession>B7LA28</accession>
<feature type="chain" id="PRO_1000125438" description="ATP-dependent protease ATPase subunit HslU">
    <location>
        <begin position="1"/>
        <end position="443"/>
    </location>
</feature>
<feature type="binding site" evidence="1">
    <location>
        <position position="18"/>
    </location>
    <ligand>
        <name>ATP</name>
        <dbReference type="ChEBI" id="CHEBI:30616"/>
    </ligand>
</feature>
<feature type="binding site" evidence="1">
    <location>
        <begin position="60"/>
        <end position="65"/>
    </location>
    <ligand>
        <name>ATP</name>
        <dbReference type="ChEBI" id="CHEBI:30616"/>
    </ligand>
</feature>
<feature type="binding site" evidence="1">
    <location>
        <position position="256"/>
    </location>
    <ligand>
        <name>ATP</name>
        <dbReference type="ChEBI" id="CHEBI:30616"/>
    </ligand>
</feature>
<feature type="binding site" evidence="1">
    <location>
        <position position="321"/>
    </location>
    <ligand>
        <name>ATP</name>
        <dbReference type="ChEBI" id="CHEBI:30616"/>
    </ligand>
</feature>
<feature type="binding site" evidence="1">
    <location>
        <position position="393"/>
    </location>
    <ligand>
        <name>ATP</name>
        <dbReference type="ChEBI" id="CHEBI:30616"/>
    </ligand>
</feature>
<organism>
    <name type="scientific">Escherichia coli (strain 55989 / EAEC)</name>
    <dbReference type="NCBI Taxonomy" id="585055"/>
    <lineage>
        <taxon>Bacteria</taxon>
        <taxon>Pseudomonadati</taxon>
        <taxon>Pseudomonadota</taxon>
        <taxon>Gammaproteobacteria</taxon>
        <taxon>Enterobacterales</taxon>
        <taxon>Enterobacteriaceae</taxon>
        <taxon>Escherichia</taxon>
    </lineage>
</organism>
<protein>
    <recommendedName>
        <fullName evidence="1">ATP-dependent protease ATPase subunit HslU</fullName>
    </recommendedName>
    <alternativeName>
        <fullName evidence="1">Heat shock protein HslU</fullName>
    </alternativeName>
    <alternativeName>
        <fullName evidence="1">Unfoldase HslU</fullName>
    </alternativeName>
</protein>
<name>HSLU_ECO55</name>
<reference key="1">
    <citation type="journal article" date="2009" name="PLoS Genet.">
        <title>Organised genome dynamics in the Escherichia coli species results in highly diverse adaptive paths.</title>
        <authorList>
            <person name="Touchon M."/>
            <person name="Hoede C."/>
            <person name="Tenaillon O."/>
            <person name="Barbe V."/>
            <person name="Baeriswyl S."/>
            <person name="Bidet P."/>
            <person name="Bingen E."/>
            <person name="Bonacorsi S."/>
            <person name="Bouchier C."/>
            <person name="Bouvet O."/>
            <person name="Calteau A."/>
            <person name="Chiapello H."/>
            <person name="Clermont O."/>
            <person name="Cruveiller S."/>
            <person name="Danchin A."/>
            <person name="Diard M."/>
            <person name="Dossat C."/>
            <person name="Karoui M.E."/>
            <person name="Frapy E."/>
            <person name="Garry L."/>
            <person name="Ghigo J.M."/>
            <person name="Gilles A.M."/>
            <person name="Johnson J."/>
            <person name="Le Bouguenec C."/>
            <person name="Lescat M."/>
            <person name="Mangenot S."/>
            <person name="Martinez-Jehanne V."/>
            <person name="Matic I."/>
            <person name="Nassif X."/>
            <person name="Oztas S."/>
            <person name="Petit M.A."/>
            <person name="Pichon C."/>
            <person name="Rouy Z."/>
            <person name="Ruf C.S."/>
            <person name="Schneider D."/>
            <person name="Tourret J."/>
            <person name="Vacherie B."/>
            <person name="Vallenet D."/>
            <person name="Medigue C."/>
            <person name="Rocha E.P.C."/>
            <person name="Denamur E."/>
        </authorList>
    </citation>
    <scope>NUCLEOTIDE SEQUENCE [LARGE SCALE GENOMIC DNA]</scope>
    <source>
        <strain>55989 / EAEC</strain>
    </source>
</reference>
<dbReference type="EMBL" id="CU928145">
    <property type="protein sequence ID" value="CAV01135.1"/>
    <property type="molecule type" value="Genomic_DNA"/>
</dbReference>
<dbReference type="RefSeq" id="WP_001293343.1">
    <property type="nucleotide sequence ID" value="NC_011748.1"/>
</dbReference>
<dbReference type="SMR" id="B7LA28"/>
<dbReference type="GeneID" id="86944460"/>
<dbReference type="KEGG" id="eck:EC55989_4409"/>
<dbReference type="HOGENOM" id="CLU_033123_0_0_6"/>
<dbReference type="Proteomes" id="UP000000746">
    <property type="component" value="Chromosome"/>
</dbReference>
<dbReference type="GO" id="GO:0009376">
    <property type="term" value="C:HslUV protease complex"/>
    <property type="evidence" value="ECO:0007669"/>
    <property type="project" value="UniProtKB-UniRule"/>
</dbReference>
<dbReference type="GO" id="GO:0005524">
    <property type="term" value="F:ATP binding"/>
    <property type="evidence" value="ECO:0007669"/>
    <property type="project" value="UniProtKB-UniRule"/>
</dbReference>
<dbReference type="GO" id="GO:0016887">
    <property type="term" value="F:ATP hydrolysis activity"/>
    <property type="evidence" value="ECO:0007669"/>
    <property type="project" value="InterPro"/>
</dbReference>
<dbReference type="GO" id="GO:0008233">
    <property type="term" value="F:peptidase activity"/>
    <property type="evidence" value="ECO:0007669"/>
    <property type="project" value="InterPro"/>
</dbReference>
<dbReference type="GO" id="GO:0036402">
    <property type="term" value="F:proteasome-activating activity"/>
    <property type="evidence" value="ECO:0007669"/>
    <property type="project" value="UniProtKB-UniRule"/>
</dbReference>
<dbReference type="GO" id="GO:0043335">
    <property type="term" value="P:protein unfolding"/>
    <property type="evidence" value="ECO:0007669"/>
    <property type="project" value="UniProtKB-UniRule"/>
</dbReference>
<dbReference type="GO" id="GO:0051603">
    <property type="term" value="P:proteolysis involved in protein catabolic process"/>
    <property type="evidence" value="ECO:0007669"/>
    <property type="project" value="TreeGrafter"/>
</dbReference>
<dbReference type="CDD" id="cd19498">
    <property type="entry name" value="RecA-like_HslU"/>
    <property type="match status" value="1"/>
</dbReference>
<dbReference type="FunFam" id="1.10.8.10:FF:000012">
    <property type="entry name" value="ATP-dependent protease ATPase subunit HslU"/>
    <property type="match status" value="1"/>
</dbReference>
<dbReference type="FunFam" id="1.10.8.10:FF:000028">
    <property type="entry name" value="ATP-dependent protease ATPase subunit HslU"/>
    <property type="match status" value="1"/>
</dbReference>
<dbReference type="FunFam" id="1.10.8.60:FF:000027">
    <property type="entry name" value="ATP-dependent protease ATPase subunit HslU"/>
    <property type="match status" value="1"/>
</dbReference>
<dbReference type="FunFam" id="3.40.50.300:FF:000213">
    <property type="entry name" value="ATP-dependent protease ATPase subunit HslU"/>
    <property type="match status" value="1"/>
</dbReference>
<dbReference type="FunFam" id="3.40.50.300:FF:000220">
    <property type="entry name" value="ATP-dependent protease ATPase subunit HslU"/>
    <property type="match status" value="1"/>
</dbReference>
<dbReference type="Gene3D" id="1.10.8.60">
    <property type="match status" value="1"/>
</dbReference>
<dbReference type="Gene3D" id="1.10.8.10">
    <property type="entry name" value="DNA helicase RuvA subunit, C-terminal domain"/>
    <property type="match status" value="2"/>
</dbReference>
<dbReference type="Gene3D" id="3.40.50.300">
    <property type="entry name" value="P-loop containing nucleotide triphosphate hydrolases"/>
    <property type="match status" value="1"/>
</dbReference>
<dbReference type="HAMAP" id="MF_00249">
    <property type="entry name" value="HslU"/>
    <property type="match status" value="1"/>
</dbReference>
<dbReference type="InterPro" id="IPR003593">
    <property type="entry name" value="AAA+_ATPase"/>
</dbReference>
<dbReference type="InterPro" id="IPR050052">
    <property type="entry name" value="ATP-dep_Clp_protease_ClpX"/>
</dbReference>
<dbReference type="InterPro" id="IPR003959">
    <property type="entry name" value="ATPase_AAA_core"/>
</dbReference>
<dbReference type="InterPro" id="IPR019489">
    <property type="entry name" value="Clp_ATPase_C"/>
</dbReference>
<dbReference type="InterPro" id="IPR004491">
    <property type="entry name" value="HslU"/>
</dbReference>
<dbReference type="InterPro" id="IPR027417">
    <property type="entry name" value="P-loop_NTPase"/>
</dbReference>
<dbReference type="NCBIfam" id="TIGR00390">
    <property type="entry name" value="hslU"/>
    <property type="match status" value="1"/>
</dbReference>
<dbReference type="NCBIfam" id="NF003544">
    <property type="entry name" value="PRK05201.1"/>
    <property type="match status" value="1"/>
</dbReference>
<dbReference type="PANTHER" id="PTHR48102">
    <property type="entry name" value="ATP-DEPENDENT CLP PROTEASE ATP-BINDING SUBUNIT CLPX-LIKE, MITOCHONDRIAL-RELATED"/>
    <property type="match status" value="1"/>
</dbReference>
<dbReference type="PANTHER" id="PTHR48102:SF3">
    <property type="entry name" value="ATP-DEPENDENT PROTEASE ATPASE SUBUNIT HSLU"/>
    <property type="match status" value="1"/>
</dbReference>
<dbReference type="Pfam" id="PF00004">
    <property type="entry name" value="AAA"/>
    <property type="match status" value="1"/>
</dbReference>
<dbReference type="Pfam" id="PF07724">
    <property type="entry name" value="AAA_2"/>
    <property type="match status" value="1"/>
</dbReference>
<dbReference type="SMART" id="SM00382">
    <property type="entry name" value="AAA"/>
    <property type="match status" value="1"/>
</dbReference>
<dbReference type="SMART" id="SM01086">
    <property type="entry name" value="ClpB_D2-small"/>
    <property type="match status" value="1"/>
</dbReference>
<dbReference type="SUPFAM" id="SSF52540">
    <property type="entry name" value="P-loop containing nucleoside triphosphate hydrolases"/>
    <property type="match status" value="1"/>
</dbReference>
<proteinExistence type="inferred from homology"/>